<keyword id="KW-1185">Reference proteome</keyword>
<keyword id="KW-0687">Ribonucleoprotein</keyword>
<keyword id="KW-0689">Ribosomal protein</keyword>
<gene>
    <name evidence="1" type="primary">rpsP</name>
    <name evidence="1" type="synonym">rps16</name>
    <name type="ordered locus">ssr0482</name>
</gene>
<accession>P74410</accession>
<feature type="chain" id="PRO_0000167265" description="Small ribosomal subunit protein bS16">
    <location>
        <begin position="1"/>
        <end position="82"/>
    </location>
</feature>
<sequence>MIKLRLKRFGKKREVSYRIVAMHSTTRRDGRPLEELGFYNPRTDETRLDVPAIVKRLKEGAQPTDTVRSILTKAQVFEQLKA</sequence>
<proteinExistence type="inferred from homology"/>
<dbReference type="EMBL" id="BA000022">
    <property type="protein sequence ID" value="BAA18508.1"/>
    <property type="molecule type" value="Genomic_DNA"/>
</dbReference>
<dbReference type="PIR" id="S76249">
    <property type="entry name" value="S76249"/>
</dbReference>
<dbReference type="SMR" id="P74410"/>
<dbReference type="FunCoup" id="P74410">
    <property type="interactions" value="444"/>
</dbReference>
<dbReference type="IntAct" id="P74410">
    <property type="interactions" value="1"/>
</dbReference>
<dbReference type="STRING" id="1148.gene:10499389"/>
<dbReference type="PaxDb" id="1148-1653595"/>
<dbReference type="EnsemblBacteria" id="BAA18508">
    <property type="protein sequence ID" value="BAA18508"/>
    <property type="gene ID" value="BAA18508"/>
</dbReference>
<dbReference type="KEGG" id="syn:ssr0482"/>
<dbReference type="eggNOG" id="COG0228">
    <property type="taxonomic scope" value="Bacteria"/>
</dbReference>
<dbReference type="InParanoid" id="P74410"/>
<dbReference type="PhylomeDB" id="P74410"/>
<dbReference type="Proteomes" id="UP000001425">
    <property type="component" value="Chromosome"/>
</dbReference>
<dbReference type="GO" id="GO:0005737">
    <property type="term" value="C:cytoplasm"/>
    <property type="evidence" value="ECO:0007669"/>
    <property type="project" value="UniProtKB-ARBA"/>
</dbReference>
<dbReference type="GO" id="GO:0015935">
    <property type="term" value="C:small ribosomal subunit"/>
    <property type="evidence" value="ECO:0000318"/>
    <property type="project" value="GO_Central"/>
</dbReference>
<dbReference type="GO" id="GO:0003735">
    <property type="term" value="F:structural constituent of ribosome"/>
    <property type="evidence" value="ECO:0000318"/>
    <property type="project" value="GO_Central"/>
</dbReference>
<dbReference type="GO" id="GO:0006412">
    <property type="term" value="P:translation"/>
    <property type="evidence" value="ECO:0007669"/>
    <property type="project" value="UniProtKB-UniRule"/>
</dbReference>
<dbReference type="FunFam" id="3.30.1320.10:FF:000016">
    <property type="entry name" value="30S ribosomal protein S16"/>
    <property type="match status" value="1"/>
</dbReference>
<dbReference type="Gene3D" id="3.30.1320.10">
    <property type="match status" value="1"/>
</dbReference>
<dbReference type="HAMAP" id="MF_00385">
    <property type="entry name" value="Ribosomal_bS16"/>
    <property type="match status" value="1"/>
</dbReference>
<dbReference type="InterPro" id="IPR000307">
    <property type="entry name" value="Ribosomal_bS16"/>
</dbReference>
<dbReference type="InterPro" id="IPR020592">
    <property type="entry name" value="Ribosomal_bS16_CS"/>
</dbReference>
<dbReference type="InterPro" id="IPR023803">
    <property type="entry name" value="Ribosomal_bS16_dom_sf"/>
</dbReference>
<dbReference type="NCBIfam" id="TIGR00002">
    <property type="entry name" value="S16"/>
    <property type="match status" value="1"/>
</dbReference>
<dbReference type="PANTHER" id="PTHR12919">
    <property type="entry name" value="30S RIBOSOMAL PROTEIN S16"/>
    <property type="match status" value="1"/>
</dbReference>
<dbReference type="PANTHER" id="PTHR12919:SF20">
    <property type="entry name" value="SMALL RIBOSOMAL SUBUNIT PROTEIN BS16M"/>
    <property type="match status" value="1"/>
</dbReference>
<dbReference type="Pfam" id="PF00886">
    <property type="entry name" value="Ribosomal_S16"/>
    <property type="match status" value="1"/>
</dbReference>
<dbReference type="SUPFAM" id="SSF54565">
    <property type="entry name" value="Ribosomal protein S16"/>
    <property type="match status" value="1"/>
</dbReference>
<dbReference type="PROSITE" id="PS00732">
    <property type="entry name" value="RIBOSOMAL_S16"/>
    <property type="match status" value="1"/>
</dbReference>
<evidence type="ECO:0000255" key="1">
    <source>
        <dbReference type="HAMAP-Rule" id="MF_00385"/>
    </source>
</evidence>
<evidence type="ECO:0000305" key="2"/>
<name>RS16_SYNY3</name>
<reference key="1">
    <citation type="journal article" date="1996" name="DNA Res.">
        <title>Sequence analysis of the genome of the unicellular cyanobacterium Synechocystis sp. strain PCC6803. II. Sequence determination of the entire genome and assignment of potential protein-coding regions.</title>
        <authorList>
            <person name="Kaneko T."/>
            <person name="Sato S."/>
            <person name="Kotani H."/>
            <person name="Tanaka A."/>
            <person name="Asamizu E."/>
            <person name="Nakamura Y."/>
            <person name="Miyajima N."/>
            <person name="Hirosawa M."/>
            <person name="Sugiura M."/>
            <person name="Sasamoto S."/>
            <person name="Kimura T."/>
            <person name="Hosouchi T."/>
            <person name="Matsuno A."/>
            <person name="Muraki A."/>
            <person name="Nakazaki N."/>
            <person name="Naruo K."/>
            <person name="Okumura S."/>
            <person name="Shimpo S."/>
            <person name="Takeuchi C."/>
            <person name="Wada T."/>
            <person name="Watanabe A."/>
            <person name="Yamada M."/>
            <person name="Yasuda M."/>
            <person name="Tabata S."/>
        </authorList>
    </citation>
    <scope>NUCLEOTIDE SEQUENCE [LARGE SCALE GENOMIC DNA]</scope>
    <source>
        <strain>ATCC 27184 / PCC 6803 / Kazusa</strain>
    </source>
</reference>
<organism>
    <name type="scientific">Synechocystis sp. (strain ATCC 27184 / PCC 6803 / Kazusa)</name>
    <dbReference type="NCBI Taxonomy" id="1111708"/>
    <lineage>
        <taxon>Bacteria</taxon>
        <taxon>Bacillati</taxon>
        <taxon>Cyanobacteriota</taxon>
        <taxon>Cyanophyceae</taxon>
        <taxon>Synechococcales</taxon>
        <taxon>Merismopediaceae</taxon>
        <taxon>Synechocystis</taxon>
    </lineage>
</organism>
<protein>
    <recommendedName>
        <fullName evidence="1">Small ribosomal subunit protein bS16</fullName>
    </recommendedName>
    <alternativeName>
        <fullName evidence="2">30S ribosomal protein S16</fullName>
    </alternativeName>
</protein>
<comment type="similarity">
    <text evidence="1">Belongs to the bacterial ribosomal protein bS16 family.</text>
</comment>